<reference key="1">
    <citation type="journal article" date="2014" name="Toxicon">
        <title>The molecular diversity of toxin gene families in lethal Amanita mushrooms.</title>
        <authorList>
            <person name="Li P."/>
            <person name="Deng W."/>
            <person name="Li T."/>
        </authorList>
    </citation>
    <scope>NUCLEOTIDE SEQUENCE [GENOMIC DNA]</scope>
    <scope>FUNCTION</scope>
</reference>
<keyword id="KW-0883">Thioether bond</keyword>
<keyword id="KW-0800">Toxin</keyword>
<feature type="propeptide" id="PRO_0000443629" evidence="2">
    <location>
        <position position="1"/>
    </location>
</feature>
<feature type="peptide" id="PRO_0000443630" description="Phallacidin" evidence="2">
    <location>
        <begin position="2"/>
        <end position="8"/>
    </location>
</feature>
<feature type="propeptide" id="PRO_0000443631" evidence="2">
    <location>
        <begin position="9"/>
        <end position="23"/>
    </location>
</feature>
<feature type="cross-link" description="Cyclopeptide (Ala-Pro)" evidence="2">
    <location>
        <begin position="2"/>
        <end position="8"/>
    </location>
</feature>
<feature type="cross-link" description="2'-cysteinyl-6'-hydroxytryptophan sulfoxide (Trp-Cys)" evidence="3">
    <location>
        <begin position="3"/>
        <end position="7"/>
    </location>
</feature>
<feature type="non-terminal residue" evidence="5">
    <location>
        <position position="1"/>
    </location>
</feature>
<accession>A0A023UBA8</accession>
<dbReference type="EMBL" id="KF546305">
    <property type="protein sequence ID" value="AHX98329.1"/>
    <property type="molecule type" value="Genomic_DNA"/>
</dbReference>
<dbReference type="EMBL" id="KF546306">
    <property type="protein sequence ID" value="AHX98330.1"/>
    <property type="molecule type" value="Genomic_DNA"/>
</dbReference>
<dbReference type="EMBL" id="KF546307">
    <property type="protein sequence ID" value="AHX98331.1"/>
    <property type="molecule type" value="Genomic_DNA"/>
</dbReference>
<dbReference type="GO" id="GO:0090729">
    <property type="term" value="F:toxin activity"/>
    <property type="evidence" value="ECO:0007669"/>
    <property type="project" value="UniProtKB-KW"/>
</dbReference>
<dbReference type="InterPro" id="IPR027582">
    <property type="entry name" value="Amanitin/phalloidin"/>
</dbReference>
<dbReference type="NCBIfam" id="TIGR04309">
    <property type="entry name" value="amanitin"/>
    <property type="match status" value="1"/>
</dbReference>
<protein>
    <recommendedName>
        <fullName evidence="4">Phallacidin proprotein</fullName>
    </recommendedName>
    <component>
        <recommendedName>
            <fullName evidence="4">Phallacidin</fullName>
        </recommendedName>
    </component>
</protein>
<proteinExistence type="inferred from homology"/>
<comment type="function">
    <text evidence="6">Major toxin that belongs to the bicyclic heptapeptides called phallotoxins (PubMed:24613547). Although structurally related to amatoxins, phallotoxins have a different mode of action, which is the stabilization of F-actin (PubMed:24613547). Phallotoxins are poisonous when administered parenterally, but not orally because of poor absorption (PubMed:24613547).</text>
</comment>
<comment type="PTM">
    <text evidence="1">Processed by the macrocyclase-peptidase enzyme POPB to yield a toxic cyclic heptapeptide (By similarity). POPB first removes 10 residues from the N-terminus (By similarity). Conformational trapping of the remaining peptide forces the enzyme to release this intermediate rather than proceed to macrocyclization (By similarity). The enzyme rebinds the remaining peptide in a different conformation and catalyzes macrocyclization of the N-terminal 7 residues (By similarity).</text>
</comment>
<comment type="similarity">
    <text evidence="5">Belongs to the MSDIN fungal toxin family.</text>
</comment>
<organism>
    <name type="scientific">Amanita rimosa</name>
    <dbReference type="NCBI Taxonomy" id="580330"/>
    <lineage>
        <taxon>Eukaryota</taxon>
        <taxon>Fungi</taxon>
        <taxon>Dikarya</taxon>
        <taxon>Basidiomycota</taxon>
        <taxon>Agaricomycotina</taxon>
        <taxon>Agaricomycetes</taxon>
        <taxon>Agaricomycetidae</taxon>
        <taxon>Agaricales</taxon>
        <taxon>Pluteineae</taxon>
        <taxon>Amanitaceae</taxon>
        <taxon>Amanita</taxon>
    </lineage>
</organism>
<name>PHAT_AMARI</name>
<sequence length="23" mass="2544">PAWLVDCPCVGDDISRLLTRGEK</sequence>
<evidence type="ECO:0000250" key="1">
    <source>
        <dbReference type="UniProtKB" id="A0A067SLB9"/>
    </source>
</evidence>
<evidence type="ECO:0000250" key="2">
    <source>
        <dbReference type="UniProtKB" id="A8W7M4"/>
    </source>
</evidence>
<evidence type="ECO:0000250" key="3">
    <source>
        <dbReference type="UniProtKB" id="P85421"/>
    </source>
</evidence>
<evidence type="ECO:0000303" key="4">
    <source>
    </source>
</evidence>
<evidence type="ECO:0000305" key="5"/>
<evidence type="ECO:0000305" key="6">
    <source>
    </source>
</evidence>